<accession>P0A1N7</accession>
<accession>P55887</accession>
<feature type="chain" id="PRO_0000171629" description="Flavodoxin 2">
    <location>
        <begin position="1"/>
        <end position="173"/>
    </location>
</feature>
<feature type="domain" description="Flavodoxin-like" evidence="2">
    <location>
        <begin position="3"/>
        <end position="165"/>
    </location>
</feature>
<organism>
    <name type="scientific">Salmonella typhi</name>
    <dbReference type="NCBI Taxonomy" id="90370"/>
    <lineage>
        <taxon>Bacteria</taxon>
        <taxon>Pseudomonadati</taxon>
        <taxon>Pseudomonadota</taxon>
        <taxon>Gammaproteobacteria</taxon>
        <taxon>Enterobacterales</taxon>
        <taxon>Enterobacteriaceae</taxon>
        <taxon>Salmonella</taxon>
    </lineage>
</organism>
<evidence type="ECO:0000250" key="1"/>
<evidence type="ECO:0000255" key="2">
    <source>
        <dbReference type="PROSITE-ProRule" id="PRU00088"/>
    </source>
</evidence>
<evidence type="ECO:0000305" key="3"/>
<comment type="function">
    <text evidence="3">Low-potential electron donor to a number of redox enzymes.</text>
</comment>
<comment type="cofactor">
    <cofactor evidence="1">
        <name>FMN</name>
        <dbReference type="ChEBI" id="CHEBI:58210"/>
    </cofactor>
</comment>
<comment type="similarity">
    <text evidence="3">Belongs to the flavodoxin family.</text>
</comment>
<proteinExistence type="inferred from homology"/>
<keyword id="KW-0249">Electron transport</keyword>
<keyword id="KW-0285">Flavoprotein</keyword>
<keyword id="KW-0288">FMN</keyword>
<keyword id="KW-0813">Transport</keyword>
<gene>
    <name type="primary">fldB</name>
    <name type="ordered locus">STY3201</name>
    <name type="ordered locus">t2963</name>
</gene>
<protein>
    <recommendedName>
        <fullName>Flavodoxin 2</fullName>
    </recommendedName>
</protein>
<name>FLAW_SALTI</name>
<sequence>MNMGLFYGSSTCYTEMAAEKIRDILGPELVTLHNLKDDAPALMEQYDVLILGIPTWDFGEIQEDWEAVWEQLDDLNLEGKIVALYGMGDQLGYGEWFLDALGMLHDKLALKGVKFVGYWPTEGYEFTSNKPVIADGQLFVGLALDETNQYDLSDERIQTWCEQILGEMAEHYA</sequence>
<reference key="1">
    <citation type="journal article" date="2001" name="Nature">
        <title>Complete genome sequence of a multiple drug resistant Salmonella enterica serovar Typhi CT18.</title>
        <authorList>
            <person name="Parkhill J."/>
            <person name="Dougan G."/>
            <person name="James K.D."/>
            <person name="Thomson N.R."/>
            <person name="Pickard D."/>
            <person name="Wain J."/>
            <person name="Churcher C.M."/>
            <person name="Mungall K.L."/>
            <person name="Bentley S.D."/>
            <person name="Holden M.T.G."/>
            <person name="Sebaihia M."/>
            <person name="Baker S."/>
            <person name="Basham D."/>
            <person name="Brooks K."/>
            <person name="Chillingworth T."/>
            <person name="Connerton P."/>
            <person name="Cronin A."/>
            <person name="Davis P."/>
            <person name="Davies R.M."/>
            <person name="Dowd L."/>
            <person name="White N."/>
            <person name="Farrar J."/>
            <person name="Feltwell T."/>
            <person name="Hamlin N."/>
            <person name="Haque A."/>
            <person name="Hien T.T."/>
            <person name="Holroyd S."/>
            <person name="Jagels K."/>
            <person name="Krogh A."/>
            <person name="Larsen T.S."/>
            <person name="Leather S."/>
            <person name="Moule S."/>
            <person name="O'Gaora P."/>
            <person name="Parry C."/>
            <person name="Quail M.A."/>
            <person name="Rutherford K.M."/>
            <person name="Simmonds M."/>
            <person name="Skelton J."/>
            <person name="Stevens K."/>
            <person name="Whitehead S."/>
            <person name="Barrell B.G."/>
        </authorList>
    </citation>
    <scope>NUCLEOTIDE SEQUENCE [LARGE SCALE GENOMIC DNA]</scope>
    <source>
        <strain>CT18</strain>
    </source>
</reference>
<reference key="2">
    <citation type="journal article" date="2003" name="J. Bacteriol.">
        <title>Comparative genomics of Salmonella enterica serovar Typhi strains Ty2 and CT18.</title>
        <authorList>
            <person name="Deng W."/>
            <person name="Liou S.-R."/>
            <person name="Plunkett G. III"/>
            <person name="Mayhew G.F."/>
            <person name="Rose D.J."/>
            <person name="Burland V."/>
            <person name="Kodoyianni V."/>
            <person name="Schwartz D.C."/>
            <person name="Blattner F.R."/>
        </authorList>
    </citation>
    <scope>NUCLEOTIDE SEQUENCE [LARGE SCALE GENOMIC DNA]</scope>
    <source>
        <strain>ATCC 700931 / Ty2</strain>
    </source>
</reference>
<dbReference type="EMBL" id="AL513382">
    <property type="protein sequence ID" value="CAD02875.1"/>
    <property type="molecule type" value="Genomic_DNA"/>
</dbReference>
<dbReference type="EMBL" id="AE014613">
    <property type="protein sequence ID" value="AAO70515.1"/>
    <property type="molecule type" value="Genomic_DNA"/>
</dbReference>
<dbReference type="RefSeq" id="NP_457443.1">
    <property type="nucleotide sequence ID" value="NC_003198.1"/>
</dbReference>
<dbReference type="RefSeq" id="WP_001055885.1">
    <property type="nucleotide sequence ID" value="NZ_WSUR01000024.1"/>
</dbReference>
<dbReference type="SMR" id="P0A1N7"/>
<dbReference type="STRING" id="220341.gene:17587076"/>
<dbReference type="KEGG" id="stt:t2963"/>
<dbReference type="KEGG" id="sty:STY3201"/>
<dbReference type="PATRIC" id="fig|220341.7.peg.3259"/>
<dbReference type="eggNOG" id="COG0716">
    <property type="taxonomic scope" value="Bacteria"/>
</dbReference>
<dbReference type="HOGENOM" id="CLU_051402_1_0_6"/>
<dbReference type="OMA" id="ILGISTW"/>
<dbReference type="OrthoDB" id="359268at2"/>
<dbReference type="Proteomes" id="UP000000541">
    <property type="component" value="Chromosome"/>
</dbReference>
<dbReference type="Proteomes" id="UP000002670">
    <property type="component" value="Chromosome"/>
</dbReference>
<dbReference type="GO" id="GO:0009055">
    <property type="term" value="F:electron transfer activity"/>
    <property type="evidence" value="ECO:0007669"/>
    <property type="project" value="InterPro"/>
</dbReference>
<dbReference type="GO" id="GO:0010181">
    <property type="term" value="F:FMN binding"/>
    <property type="evidence" value="ECO:0007669"/>
    <property type="project" value="InterPro"/>
</dbReference>
<dbReference type="FunFam" id="3.40.50.360:FF:000006">
    <property type="entry name" value="Flavodoxin"/>
    <property type="match status" value="1"/>
</dbReference>
<dbReference type="Gene3D" id="3.40.50.360">
    <property type="match status" value="1"/>
</dbReference>
<dbReference type="InterPro" id="IPR050619">
    <property type="entry name" value="Flavodoxin"/>
</dbReference>
<dbReference type="InterPro" id="IPR008254">
    <property type="entry name" value="Flavodoxin/NO_synth"/>
</dbReference>
<dbReference type="InterPro" id="IPR001226">
    <property type="entry name" value="Flavodoxin_CS"/>
</dbReference>
<dbReference type="InterPro" id="IPR010086">
    <property type="entry name" value="Flavodoxin_lc"/>
</dbReference>
<dbReference type="InterPro" id="IPR029039">
    <property type="entry name" value="Flavoprotein-like_sf"/>
</dbReference>
<dbReference type="NCBIfam" id="TIGR01752">
    <property type="entry name" value="flav_long"/>
    <property type="match status" value="1"/>
</dbReference>
<dbReference type="NCBIfam" id="NF009023">
    <property type="entry name" value="PRK12359.1"/>
    <property type="match status" value="1"/>
</dbReference>
<dbReference type="PANTHER" id="PTHR42809">
    <property type="entry name" value="FLAVODOXIN 2"/>
    <property type="match status" value="1"/>
</dbReference>
<dbReference type="PANTHER" id="PTHR42809:SF3">
    <property type="entry name" value="FLAVODOXIN 2"/>
    <property type="match status" value="1"/>
</dbReference>
<dbReference type="Pfam" id="PF00258">
    <property type="entry name" value="Flavodoxin_1"/>
    <property type="match status" value="1"/>
</dbReference>
<dbReference type="PIRSF" id="PIRSF038996">
    <property type="entry name" value="FldA"/>
    <property type="match status" value="1"/>
</dbReference>
<dbReference type="SUPFAM" id="SSF52218">
    <property type="entry name" value="Flavoproteins"/>
    <property type="match status" value="1"/>
</dbReference>
<dbReference type="PROSITE" id="PS00201">
    <property type="entry name" value="FLAVODOXIN"/>
    <property type="match status" value="1"/>
</dbReference>
<dbReference type="PROSITE" id="PS50902">
    <property type="entry name" value="FLAVODOXIN_LIKE"/>
    <property type="match status" value="1"/>
</dbReference>